<gene>
    <name type="primary">yccJ</name>
    <name type="ordered locus">SF1007</name>
    <name type="ordered locus">S1076</name>
</gene>
<keyword id="KW-1185">Reference proteome</keyword>
<reference key="1">
    <citation type="journal article" date="2002" name="Nucleic Acids Res.">
        <title>Genome sequence of Shigella flexneri 2a: insights into pathogenicity through comparison with genomes of Escherichia coli K12 and O157.</title>
        <authorList>
            <person name="Jin Q."/>
            <person name="Yuan Z."/>
            <person name="Xu J."/>
            <person name="Wang Y."/>
            <person name="Shen Y."/>
            <person name="Lu W."/>
            <person name="Wang J."/>
            <person name="Liu H."/>
            <person name="Yang J."/>
            <person name="Yang F."/>
            <person name="Zhang X."/>
            <person name="Zhang J."/>
            <person name="Yang G."/>
            <person name="Wu H."/>
            <person name="Qu D."/>
            <person name="Dong J."/>
            <person name="Sun L."/>
            <person name="Xue Y."/>
            <person name="Zhao A."/>
            <person name="Gao Y."/>
            <person name="Zhu J."/>
            <person name="Kan B."/>
            <person name="Ding K."/>
            <person name="Chen S."/>
            <person name="Cheng H."/>
            <person name="Yao Z."/>
            <person name="He B."/>
            <person name="Chen R."/>
            <person name="Ma D."/>
            <person name="Qiang B."/>
            <person name="Wen Y."/>
            <person name="Hou Y."/>
            <person name="Yu J."/>
        </authorList>
    </citation>
    <scope>NUCLEOTIDE SEQUENCE [LARGE SCALE GENOMIC DNA]</scope>
    <source>
        <strain>301 / Serotype 2a</strain>
    </source>
</reference>
<reference key="2">
    <citation type="journal article" date="2003" name="Infect. Immun.">
        <title>Complete genome sequence and comparative genomics of Shigella flexneri serotype 2a strain 2457T.</title>
        <authorList>
            <person name="Wei J."/>
            <person name="Goldberg M.B."/>
            <person name="Burland V."/>
            <person name="Venkatesan M.M."/>
            <person name="Deng W."/>
            <person name="Fournier G."/>
            <person name="Mayhew G.F."/>
            <person name="Plunkett G. III"/>
            <person name="Rose D.J."/>
            <person name="Darling A."/>
            <person name="Mau B."/>
            <person name="Perna N.T."/>
            <person name="Payne S.M."/>
            <person name="Runyen-Janecky L.J."/>
            <person name="Zhou S."/>
            <person name="Schwartz D.C."/>
            <person name="Blattner F.R."/>
        </authorList>
    </citation>
    <scope>NUCLEOTIDE SEQUENCE [LARGE SCALE GENOMIC DNA]</scope>
    <source>
        <strain>ATCC 700930 / 2457T / Serotype 2a</strain>
    </source>
</reference>
<feature type="chain" id="PRO_0000168788" description="Uncharacterized protein YccJ">
    <location>
        <begin position="1"/>
        <end position="75"/>
    </location>
</feature>
<protein>
    <recommendedName>
        <fullName>Uncharacterized protein YccJ</fullName>
    </recommendedName>
</protein>
<organism>
    <name type="scientific">Shigella flexneri</name>
    <dbReference type="NCBI Taxonomy" id="623"/>
    <lineage>
        <taxon>Bacteria</taxon>
        <taxon>Pseudomonadati</taxon>
        <taxon>Pseudomonadota</taxon>
        <taxon>Gammaproteobacteria</taxon>
        <taxon>Enterobacterales</taxon>
        <taxon>Enterobacteriaceae</taxon>
        <taxon>Shigella</taxon>
    </lineage>
</organism>
<proteinExistence type="predicted"/>
<sequence>MPTQEAKAHHVGEWASLRNTSPEIAEAIFEVAGYDEKMAEKIWEEGSDEVLVKAFAKTDKDSLFWGEQTIERKNV</sequence>
<dbReference type="EMBL" id="AE005674">
    <property type="protein sequence ID" value="AAN42633.1"/>
    <property type="molecule type" value="Genomic_DNA"/>
</dbReference>
<dbReference type="EMBL" id="AE014073">
    <property type="protein sequence ID" value="AAP16517.1"/>
    <property type="molecule type" value="Genomic_DNA"/>
</dbReference>
<dbReference type="RefSeq" id="NP_706926.1">
    <property type="nucleotide sequence ID" value="NC_004337.2"/>
</dbReference>
<dbReference type="RefSeq" id="WP_001143120.1">
    <property type="nucleotide sequence ID" value="NZ_WPGW01000134.1"/>
</dbReference>
<dbReference type="STRING" id="198214.SF1007"/>
<dbReference type="PaxDb" id="198214-SF1007"/>
<dbReference type="GeneID" id="1023969"/>
<dbReference type="KEGG" id="sfl:SF1007"/>
<dbReference type="KEGG" id="sfx:S1076"/>
<dbReference type="PATRIC" id="fig|198214.7.peg.1171"/>
<dbReference type="HOGENOM" id="CLU_202423_0_0_6"/>
<dbReference type="Proteomes" id="UP000001006">
    <property type="component" value="Chromosome"/>
</dbReference>
<dbReference type="Proteomes" id="UP000002673">
    <property type="component" value="Chromosome"/>
</dbReference>
<dbReference type="InterPro" id="IPR025600">
    <property type="entry name" value="YccJ"/>
</dbReference>
<dbReference type="NCBIfam" id="NF007554">
    <property type="entry name" value="PRK10174.1"/>
    <property type="match status" value="1"/>
</dbReference>
<dbReference type="Pfam" id="PF13993">
    <property type="entry name" value="YccJ"/>
    <property type="match status" value="1"/>
</dbReference>
<name>YCCJ_SHIFL</name>
<accession>P0AB17</accession>
<accession>P46131</accession>